<organism>
    <name type="scientific">Staphylococcus saprophyticus subsp. saprophyticus (strain ATCC 15305 / DSM 20229 / NCIMB 8711 / NCTC 7292 / S-41)</name>
    <dbReference type="NCBI Taxonomy" id="342451"/>
    <lineage>
        <taxon>Bacteria</taxon>
        <taxon>Bacillati</taxon>
        <taxon>Bacillota</taxon>
        <taxon>Bacilli</taxon>
        <taxon>Bacillales</taxon>
        <taxon>Staphylococcaceae</taxon>
        <taxon>Staphylococcus</taxon>
    </lineage>
</organism>
<reference key="1">
    <citation type="journal article" date="2005" name="Proc. Natl. Acad. Sci. U.S.A.">
        <title>Whole genome sequence of Staphylococcus saprophyticus reveals the pathogenesis of uncomplicated urinary tract infection.</title>
        <authorList>
            <person name="Kuroda M."/>
            <person name="Yamashita A."/>
            <person name="Hirakawa H."/>
            <person name="Kumano M."/>
            <person name="Morikawa K."/>
            <person name="Higashide M."/>
            <person name="Maruyama A."/>
            <person name="Inose Y."/>
            <person name="Matoba K."/>
            <person name="Toh H."/>
            <person name="Kuhara S."/>
            <person name="Hattori M."/>
            <person name="Ohta T."/>
        </authorList>
    </citation>
    <scope>NUCLEOTIDE SEQUENCE [LARGE SCALE GENOMIC DNA]</scope>
    <source>
        <strain>ATCC 15305 / DSM 20229 / NCIMB 8711 / NCTC 7292 / S-41</strain>
    </source>
</reference>
<dbReference type="EC" id="4.3.3.6" evidence="1"/>
<dbReference type="EMBL" id="AP008934">
    <property type="protein sequence ID" value="BAE19382.1"/>
    <property type="molecule type" value="Genomic_DNA"/>
</dbReference>
<dbReference type="RefSeq" id="WP_011303857.1">
    <property type="nucleotide sequence ID" value="NZ_MTGA01000039.1"/>
</dbReference>
<dbReference type="SMR" id="Q49V28"/>
<dbReference type="GeneID" id="66868391"/>
<dbReference type="KEGG" id="ssp:SSP2237"/>
<dbReference type="eggNOG" id="COG0214">
    <property type="taxonomic scope" value="Bacteria"/>
</dbReference>
<dbReference type="HOGENOM" id="CLU_055352_1_0_9"/>
<dbReference type="OrthoDB" id="9772545at2"/>
<dbReference type="UniPathway" id="UPA00245"/>
<dbReference type="Proteomes" id="UP000006371">
    <property type="component" value="Chromosome"/>
</dbReference>
<dbReference type="GO" id="GO:0036381">
    <property type="term" value="F:pyridoxal 5'-phosphate synthase (glutamine hydrolysing) activity"/>
    <property type="evidence" value="ECO:0007669"/>
    <property type="project" value="UniProtKB-UniRule"/>
</dbReference>
<dbReference type="GO" id="GO:0006520">
    <property type="term" value="P:amino acid metabolic process"/>
    <property type="evidence" value="ECO:0007669"/>
    <property type="project" value="TreeGrafter"/>
</dbReference>
<dbReference type="GO" id="GO:0042823">
    <property type="term" value="P:pyridoxal phosphate biosynthetic process"/>
    <property type="evidence" value="ECO:0007669"/>
    <property type="project" value="UniProtKB-UniRule"/>
</dbReference>
<dbReference type="GO" id="GO:0008615">
    <property type="term" value="P:pyridoxine biosynthetic process"/>
    <property type="evidence" value="ECO:0007669"/>
    <property type="project" value="TreeGrafter"/>
</dbReference>
<dbReference type="CDD" id="cd04727">
    <property type="entry name" value="pdxS"/>
    <property type="match status" value="1"/>
</dbReference>
<dbReference type="FunFam" id="3.20.20.70:FF:000001">
    <property type="entry name" value="Pyridoxine biosynthesis protein PDX1"/>
    <property type="match status" value="1"/>
</dbReference>
<dbReference type="Gene3D" id="3.20.20.70">
    <property type="entry name" value="Aldolase class I"/>
    <property type="match status" value="1"/>
</dbReference>
<dbReference type="HAMAP" id="MF_01824">
    <property type="entry name" value="PdxS"/>
    <property type="match status" value="1"/>
</dbReference>
<dbReference type="InterPro" id="IPR013785">
    <property type="entry name" value="Aldolase_TIM"/>
</dbReference>
<dbReference type="InterPro" id="IPR001852">
    <property type="entry name" value="PdxS/SNZ"/>
</dbReference>
<dbReference type="InterPro" id="IPR033755">
    <property type="entry name" value="PdxS/SNZ_N"/>
</dbReference>
<dbReference type="InterPro" id="IPR011060">
    <property type="entry name" value="RibuloseP-bd_barrel"/>
</dbReference>
<dbReference type="NCBIfam" id="NF003215">
    <property type="entry name" value="PRK04180.1"/>
    <property type="match status" value="1"/>
</dbReference>
<dbReference type="NCBIfam" id="TIGR00343">
    <property type="entry name" value="pyridoxal 5'-phosphate synthase lyase subunit PdxS"/>
    <property type="match status" value="1"/>
</dbReference>
<dbReference type="PANTHER" id="PTHR31829">
    <property type="entry name" value="PYRIDOXAL 5'-PHOSPHATE SYNTHASE SUBUNIT SNZ1-RELATED"/>
    <property type="match status" value="1"/>
</dbReference>
<dbReference type="PANTHER" id="PTHR31829:SF0">
    <property type="entry name" value="PYRIDOXAL 5'-PHOSPHATE SYNTHASE SUBUNIT SNZ1-RELATED"/>
    <property type="match status" value="1"/>
</dbReference>
<dbReference type="Pfam" id="PF01680">
    <property type="entry name" value="SOR_SNZ"/>
    <property type="match status" value="1"/>
</dbReference>
<dbReference type="PIRSF" id="PIRSF029271">
    <property type="entry name" value="Pdx1"/>
    <property type="match status" value="1"/>
</dbReference>
<dbReference type="SUPFAM" id="SSF51366">
    <property type="entry name" value="Ribulose-phoshate binding barrel"/>
    <property type="match status" value="1"/>
</dbReference>
<dbReference type="PROSITE" id="PS01235">
    <property type="entry name" value="PDXS_SNZ_1"/>
    <property type="match status" value="1"/>
</dbReference>
<dbReference type="PROSITE" id="PS51129">
    <property type="entry name" value="PDXS_SNZ_2"/>
    <property type="match status" value="1"/>
</dbReference>
<accession>Q49V28</accession>
<protein>
    <recommendedName>
        <fullName evidence="1">Pyridoxal 5'-phosphate synthase subunit PdxS</fullName>
        <shortName evidence="1">PLP synthase subunit PdxS</shortName>
        <ecNumber evidence="1">4.3.3.6</ecNumber>
    </recommendedName>
    <alternativeName>
        <fullName evidence="1">Pdx1</fullName>
    </alternativeName>
</protein>
<keyword id="KW-0456">Lyase</keyword>
<keyword id="KW-0663">Pyridoxal phosphate</keyword>
<keyword id="KW-1185">Reference proteome</keyword>
<keyword id="KW-0704">Schiff base</keyword>
<evidence type="ECO:0000255" key="1">
    <source>
        <dbReference type="HAMAP-Rule" id="MF_01824"/>
    </source>
</evidence>
<comment type="function">
    <text evidence="1">Catalyzes the formation of pyridoxal 5'-phosphate from ribose 5-phosphate (RBP), glyceraldehyde 3-phosphate (G3P) and ammonia. The ammonia is provided by the PdxT subunit. Can also use ribulose 5-phosphate and dihydroxyacetone phosphate as substrates, resulting from enzyme-catalyzed isomerization of RBP and G3P, respectively.</text>
</comment>
<comment type="catalytic activity">
    <reaction evidence="1">
        <text>aldehydo-D-ribose 5-phosphate + D-glyceraldehyde 3-phosphate + L-glutamine = pyridoxal 5'-phosphate + L-glutamate + phosphate + 3 H2O + H(+)</text>
        <dbReference type="Rhea" id="RHEA:31507"/>
        <dbReference type="ChEBI" id="CHEBI:15377"/>
        <dbReference type="ChEBI" id="CHEBI:15378"/>
        <dbReference type="ChEBI" id="CHEBI:29985"/>
        <dbReference type="ChEBI" id="CHEBI:43474"/>
        <dbReference type="ChEBI" id="CHEBI:58273"/>
        <dbReference type="ChEBI" id="CHEBI:58359"/>
        <dbReference type="ChEBI" id="CHEBI:59776"/>
        <dbReference type="ChEBI" id="CHEBI:597326"/>
        <dbReference type="EC" id="4.3.3.6"/>
    </reaction>
</comment>
<comment type="pathway">
    <text evidence="1">Cofactor biosynthesis; pyridoxal 5'-phosphate biosynthesis.</text>
</comment>
<comment type="subunit">
    <text evidence="1">In the presence of PdxT, forms a dodecamer of heterodimers.</text>
</comment>
<comment type="similarity">
    <text evidence="1">Belongs to the PdxS/SNZ family.</text>
</comment>
<proteinExistence type="inferred from homology"/>
<gene>
    <name evidence="1" type="primary">pdxS</name>
    <name type="ordered locus">SSP2237</name>
</gene>
<name>PDXS_STAS1</name>
<sequence length="295" mass="31907">MSKVTGSERVKRGMAEMQKGGVIMDVVNAEQAKIAEEAGAVAVMALERVPSDIRAAGGVARMANPKIVEEVMNAVSIPVMAKGRIGHITEARVLESMGVDYIDESEVLTPADEEYHLRKDTFTVPFVCGCRNLGEAARRIGEGAAMLRTKGEPGTGNIVEAVRHMRQVNSEVSRLTVMNDDEIMTEAKNIGAPYEVLKNIKENGKLPVVNFAAGGVATPQDAALMMELGADGVFVGSGIFKSEDPEKFAKAIVQATTHYQDYELIGRLAKELGIAMKGLDINDLSLEERMQERGW</sequence>
<feature type="chain" id="PRO_1000070399" description="Pyridoxal 5'-phosphate synthase subunit PdxS">
    <location>
        <begin position="1"/>
        <end position="295"/>
    </location>
</feature>
<feature type="active site" description="Schiff-base intermediate with D-ribose 5-phosphate" evidence="1">
    <location>
        <position position="82"/>
    </location>
</feature>
<feature type="binding site" evidence="1">
    <location>
        <position position="25"/>
    </location>
    <ligand>
        <name>D-ribose 5-phosphate</name>
        <dbReference type="ChEBI" id="CHEBI:78346"/>
    </ligand>
</feature>
<feature type="binding site" evidence="1">
    <location>
        <position position="154"/>
    </location>
    <ligand>
        <name>D-ribose 5-phosphate</name>
        <dbReference type="ChEBI" id="CHEBI:78346"/>
    </ligand>
</feature>
<feature type="binding site" evidence="1">
    <location>
        <position position="166"/>
    </location>
    <ligand>
        <name>D-glyceraldehyde 3-phosphate</name>
        <dbReference type="ChEBI" id="CHEBI:59776"/>
    </ligand>
</feature>
<feature type="binding site" evidence="1">
    <location>
        <position position="215"/>
    </location>
    <ligand>
        <name>D-ribose 5-phosphate</name>
        <dbReference type="ChEBI" id="CHEBI:78346"/>
    </ligand>
</feature>
<feature type="binding site" evidence="1">
    <location>
        <begin position="236"/>
        <end position="237"/>
    </location>
    <ligand>
        <name>D-ribose 5-phosphate</name>
        <dbReference type="ChEBI" id="CHEBI:78346"/>
    </ligand>
</feature>